<comment type="function">
    <text evidence="1">Catalyzes the initial step of the lipid cycle reactions in the biosynthesis of the cell wall peptidoglycan: transfers peptidoglycan precursor phospho-MurNAc-pentapeptide from UDP-MurNAc-pentapeptide onto the lipid carrier undecaprenyl phosphate, yielding undecaprenyl-pyrophosphoryl-MurNAc-pentapeptide, known as lipid I.</text>
</comment>
<comment type="catalytic activity">
    <reaction evidence="1">
        <text>UDP-N-acetyl-alpha-D-muramoyl-L-alanyl-gamma-D-glutamyl-meso-2,6-diaminopimeloyl-D-alanyl-D-alanine + di-trans,octa-cis-undecaprenyl phosphate = di-trans,octa-cis-undecaprenyl diphospho-N-acetyl-alpha-D-muramoyl-L-alanyl-D-glutamyl-meso-2,6-diaminopimeloyl-D-alanyl-D-alanine + UMP</text>
        <dbReference type="Rhea" id="RHEA:28386"/>
        <dbReference type="ChEBI" id="CHEBI:57865"/>
        <dbReference type="ChEBI" id="CHEBI:60392"/>
        <dbReference type="ChEBI" id="CHEBI:61386"/>
        <dbReference type="ChEBI" id="CHEBI:61387"/>
        <dbReference type="EC" id="2.7.8.13"/>
    </reaction>
</comment>
<comment type="cofactor">
    <cofactor evidence="1">
        <name>Mg(2+)</name>
        <dbReference type="ChEBI" id="CHEBI:18420"/>
    </cofactor>
</comment>
<comment type="pathway">
    <text evidence="1">Cell wall biogenesis; peptidoglycan biosynthesis.</text>
</comment>
<comment type="subcellular location">
    <subcellularLocation>
        <location evidence="1">Cell membrane</location>
        <topology evidence="1">Multi-pass membrane protein</topology>
    </subcellularLocation>
</comment>
<comment type="similarity">
    <text evidence="1">Belongs to the glycosyltransferase 4 family. MraY subfamily.</text>
</comment>
<reference key="1">
    <citation type="journal article" date="2008" name="J. Bacteriol.">
        <title>Complete genome sequence of the soil actinomycete Kocuria rhizophila.</title>
        <authorList>
            <person name="Takarada H."/>
            <person name="Sekine M."/>
            <person name="Kosugi H."/>
            <person name="Matsuo Y."/>
            <person name="Fujisawa T."/>
            <person name="Omata S."/>
            <person name="Kishi E."/>
            <person name="Shimizu A."/>
            <person name="Tsukatani N."/>
            <person name="Tanikawa S."/>
            <person name="Fujita N."/>
            <person name="Harayama S."/>
        </authorList>
    </citation>
    <scope>NUCLEOTIDE SEQUENCE [LARGE SCALE GENOMIC DNA]</scope>
    <source>
        <strain>ATCC 9341 / DSM 348 / NBRC 103217 / DC2201</strain>
    </source>
</reference>
<proteinExistence type="inferred from homology"/>
<dbReference type="EC" id="2.7.8.13" evidence="1"/>
<dbReference type="EMBL" id="AP009152">
    <property type="protein sequence ID" value="BAG29832.1"/>
    <property type="molecule type" value="Genomic_DNA"/>
</dbReference>
<dbReference type="RefSeq" id="WP_012398553.1">
    <property type="nucleotide sequence ID" value="NC_010617.1"/>
</dbReference>
<dbReference type="SMR" id="B2GJQ1"/>
<dbReference type="STRING" id="378753.KRH_14850"/>
<dbReference type="KEGG" id="krh:KRH_14850"/>
<dbReference type="eggNOG" id="COG0472">
    <property type="taxonomic scope" value="Bacteria"/>
</dbReference>
<dbReference type="HOGENOM" id="CLU_023982_0_1_11"/>
<dbReference type="OrthoDB" id="9805475at2"/>
<dbReference type="UniPathway" id="UPA00219"/>
<dbReference type="Proteomes" id="UP000008838">
    <property type="component" value="Chromosome"/>
</dbReference>
<dbReference type="GO" id="GO:0005886">
    <property type="term" value="C:plasma membrane"/>
    <property type="evidence" value="ECO:0007669"/>
    <property type="project" value="UniProtKB-SubCell"/>
</dbReference>
<dbReference type="GO" id="GO:0046872">
    <property type="term" value="F:metal ion binding"/>
    <property type="evidence" value="ECO:0007669"/>
    <property type="project" value="UniProtKB-KW"/>
</dbReference>
<dbReference type="GO" id="GO:0008963">
    <property type="term" value="F:phospho-N-acetylmuramoyl-pentapeptide-transferase activity"/>
    <property type="evidence" value="ECO:0007669"/>
    <property type="project" value="UniProtKB-UniRule"/>
</dbReference>
<dbReference type="GO" id="GO:0051992">
    <property type="term" value="F:UDP-N-acetylmuramoyl-L-alanyl-D-glutamyl-meso-2,6-diaminopimelyl-D-alanyl-D-alanine:undecaprenyl-phosphate transferase activity"/>
    <property type="evidence" value="ECO:0007669"/>
    <property type="project" value="RHEA"/>
</dbReference>
<dbReference type="GO" id="GO:0051301">
    <property type="term" value="P:cell division"/>
    <property type="evidence" value="ECO:0007669"/>
    <property type="project" value="UniProtKB-KW"/>
</dbReference>
<dbReference type="GO" id="GO:0071555">
    <property type="term" value="P:cell wall organization"/>
    <property type="evidence" value="ECO:0007669"/>
    <property type="project" value="UniProtKB-KW"/>
</dbReference>
<dbReference type="GO" id="GO:0009252">
    <property type="term" value="P:peptidoglycan biosynthetic process"/>
    <property type="evidence" value="ECO:0007669"/>
    <property type="project" value="UniProtKB-UniRule"/>
</dbReference>
<dbReference type="GO" id="GO:0008360">
    <property type="term" value="P:regulation of cell shape"/>
    <property type="evidence" value="ECO:0007669"/>
    <property type="project" value="UniProtKB-KW"/>
</dbReference>
<dbReference type="CDD" id="cd06852">
    <property type="entry name" value="GT_MraY"/>
    <property type="match status" value="1"/>
</dbReference>
<dbReference type="HAMAP" id="MF_00038">
    <property type="entry name" value="MraY"/>
    <property type="match status" value="1"/>
</dbReference>
<dbReference type="InterPro" id="IPR000715">
    <property type="entry name" value="Glycosyl_transferase_4"/>
</dbReference>
<dbReference type="InterPro" id="IPR003524">
    <property type="entry name" value="PNAcMuramoyl-5peptid_Trfase"/>
</dbReference>
<dbReference type="InterPro" id="IPR018480">
    <property type="entry name" value="PNAcMuramoyl-5peptid_Trfase_CS"/>
</dbReference>
<dbReference type="NCBIfam" id="TIGR00445">
    <property type="entry name" value="mraY"/>
    <property type="match status" value="1"/>
</dbReference>
<dbReference type="PANTHER" id="PTHR22926">
    <property type="entry name" value="PHOSPHO-N-ACETYLMURAMOYL-PENTAPEPTIDE-TRANSFERASE"/>
    <property type="match status" value="1"/>
</dbReference>
<dbReference type="PANTHER" id="PTHR22926:SF5">
    <property type="entry name" value="PHOSPHO-N-ACETYLMURAMOYL-PENTAPEPTIDE-TRANSFERASE HOMOLOG"/>
    <property type="match status" value="1"/>
</dbReference>
<dbReference type="Pfam" id="PF00953">
    <property type="entry name" value="Glycos_transf_4"/>
    <property type="match status" value="1"/>
</dbReference>
<dbReference type="Pfam" id="PF10555">
    <property type="entry name" value="MraY_sig1"/>
    <property type="match status" value="1"/>
</dbReference>
<dbReference type="PROSITE" id="PS01347">
    <property type="entry name" value="MRAY_1"/>
    <property type="match status" value="1"/>
</dbReference>
<dbReference type="PROSITE" id="PS01348">
    <property type="entry name" value="MRAY_2"/>
    <property type="match status" value="1"/>
</dbReference>
<gene>
    <name evidence="1" type="primary">mraY</name>
    <name type="ordered locus">KRH_14850</name>
</gene>
<protein>
    <recommendedName>
        <fullName evidence="1">Phospho-N-acetylmuramoyl-pentapeptide-transferase</fullName>
        <ecNumber evidence="1">2.7.8.13</ecNumber>
    </recommendedName>
    <alternativeName>
        <fullName evidence="1">UDP-MurNAc-pentapeptide phosphotransferase</fullName>
    </alternativeName>
</protein>
<name>MRAY_KOCRD</name>
<evidence type="ECO:0000255" key="1">
    <source>
        <dbReference type="HAMAP-Rule" id="MF_00038"/>
    </source>
</evidence>
<keyword id="KW-0131">Cell cycle</keyword>
<keyword id="KW-0132">Cell division</keyword>
<keyword id="KW-1003">Cell membrane</keyword>
<keyword id="KW-0133">Cell shape</keyword>
<keyword id="KW-0961">Cell wall biogenesis/degradation</keyword>
<keyword id="KW-0460">Magnesium</keyword>
<keyword id="KW-0472">Membrane</keyword>
<keyword id="KW-0479">Metal-binding</keyword>
<keyword id="KW-0573">Peptidoglycan synthesis</keyword>
<keyword id="KW-1185">Reference proteome</keyword>
<keyword id="KW-0808">Transferase</keyword>
<keyword id="KW-0812">Transmembrane</keyword>
<keyword id="KW-1133">Transmembrane helix</keyword>
<feature type="chain" id="PRO_1000090635" description="Phospho-N-acetylmuramoyl-pentapeptide-transferase">
    <location>
        <begin position="1"/>
        <end position="377"/>
    </location>
</feature>
<feature type="transmembrane region" description="Helical" evidence="1">
    <location>
        <begin position="2"/>
        <end position="22"/>
    </location>
</feature>
<feature type="transmembrane region" description="Helical" evidence="1">
    <location>
        <begin position="55"/>
        <end position="75"/>
    </location>
</feature>
<feature type="transmembrane region" description="Helical" evidence="1">
    <location>
        <begin position="82"/>
        <end position="102"/>
    </location>
</feature>
<feature type="transmembrane region" description="Helical" evidence="1">
    <location>
        <begin position="122"/>
        <end position="142"/>
    </location>
</feature>
<feature type="transmembrane region" description="Helical" evidence="1">
    <location>
        <begin position="162"/>
        <end position="182"/>
    </location>
</feature>
<feature type="transmembrane region" description="Helical" evidence="1">
    <location>
        <begin position="195"/>
        <end position="215"/>
    </location>
</feature>
<feature type="transmembrane region" description="Helical" evidence="1">
    <location>
        <begin position="236"/>
        <end position="256"/>
    </location>
</feature>
<feature type="transmembrane region" description="Helical" evidence="1">
    <location>
        <begin position="263"/>
        <end position="283"/>
    </location>
</feature>
<feature type="transmembrane region" description="Helical" evidence="1">
    <location>
        <begin position="288"/>
        <end position="308"/>
    </location>
</feature>
<feature type="transmembrane region" description="Helical" evidence="1">
    <location>
        <begin position="343"/>
        <end position="363"/>
    </location>
</feature>
<organism>
    <name type="scientific">Kocuria rhizophila (strain ATCC 9341 / DSM 348 / NBRC 103217 / DC2201)</name>
    <dbReference type="NCBI Taxonomy" id="378753"/>
    <lineage>
        <taxon>Bacteria</taxon>
        <taxon>Bacillati</taxon>
        <taxon>Actinomycetota</taxon>
        <taxon>Actinomycetes</taxon>
        <taxon>Micrococcales</taxon>
        <taxon>Micrococcaceae</taxon>
        <taxon>Kocuria</taxon>
    </lineage>
</organism>
<sequence>MIQLLMAAGLGLVFSIFGTPALIKVLARHGYGQYIRDDGPTSHQTKRGTPTMGGVAILLSVVAAYLVTHLISVLAWPENGGITLSGLLALGLMLGMGMVGFLDDYKKISKKQNLGLTAAGKMVLQGAIGSAFAVLVLFFPDAAGNTPASTAISWTRDTGVDLAFAGPVVGLILFVVWVNLIATGTTNAVNLTDGLDGLATGASILVFSGYMLITLWQAGHLCENAAQAACYAVRDPMDLSIVAAALVGALIGFLWWNTSPAKIFMGDTGSLGLGGALAAFAVLSRTELLLVLIAGLFVVITMSVILQVGYFKLSHGKRIFKMAPLQHHFELKGWQEVTIVVRFWVIAGLFVAAALGVFYGDWLLHNGGAFPGAEALH</sequence>
<accession>B2GJQ1</accession>